<evidence type="ECO:0000255" key="1">
    <source>
        <dbReference type="HAMAP-Rule" id="MF_00564"/>
    </source>
</evidence>
<name>RNPH_ECTM1</name>
<feature type="chain" id="PRO_1000024851" description="Ribonuclease PH">
    <location>
        <begin position="1"/>
        <end position="239"/>
    </location>
</feature>
<feature type="binding site" evidence="1">
    <location>
        <position position="87"/>
    </location>
    <ligand>
        <name>phosphate</name>
        <dbReference type="ChEBI" id="CHEBI:43474"/>
        <note>substrate</note>
    </ligand>
</feature>
<feature type="binding site" evidence="1">
    <location>
        <begin position="125"/>
        <end position="127"/>
    </location>
    <ligand>
        <name>phosphate</name>
        <dbReference type="ChEBI" id="CHEBI:43474"/>
        <note>substrate</note>
    </ligand>
</feature>
<gene>
    <name evidence="1" type="primary">rph</name>
    <name type="ordered locus">Pmen_4386</name>
</gene>
<sequence>MKRPSGRAADQLRSIRITRNYTKHAEGSVLVEFGDTKVICTVSVESGVPRFLKGQGQGWLTAEYGMLPRATGERNQREASRGKQGGRTLEIQRLIGRSLRAALDMSKLGENTLYVDCDVIQADGGTRTASITGAMVALIDALKVLKKRGSLKGEPLKQMIAAVSVGIYQGEPVLDLDYLEDSAAETDLNVVMTNAGGFIEVQGTAEGAPFQPEEFNAMLALAQKGMNEIFELQKAALVD</sequence>
<reference key="1">
    <citation type="submission" date="2007-04" db="EMBL/GenBank/DDBJ databases">
        <title>Complete sequence of Pseudomonas mendocina ymp.</title>
        <authorList>
            <consortium name="US DOE Joint Genome Institute"/>
            <person name="Copeland A."/>
            <person name="Lucas S."/>
            <person name="Lapidus A."/>
            <person name="Barry K."/>
            <person name="Glavina del Rio T."/>
            <person name="Dalin E."/>
            <person name="Tice H."/>
            <person name="Pitluck S."/>
            <person name="Kiss H."/>
            <person name="Brettin T."/>
            <person name="Detter J.C."/>
            <person name="Bruce D."/>
            <person name="Han C."/>
            <person name="Schmutz J."/>
            <person name="Larimer F."/>
            <person name="Land M."/>
            <person name="Hauser L."/>
            <person name="Kyrpides N."/>
            <person name="Mikhailova N."/>
            <person name="Hersman L."/>
            <person name="Dubois J."/>
            <person name="Maurice P."/>
            <person name="Richardson P."/>
        </authorList>
    </citation>
    <scope>NUCLEOTIDE SEQUENCE [LARGE SCALE GENOMIC DNA]</scope>
    <source>
        <strain>ymp</strain>
    </source>
</reference>
<keyword id="KW-0548">Nucleotidyltransferase</keyword>
<keyword id="KW-0694">RNA-binding</keyword>
<keyword id="KW-0698">rRNA processing</keyword>
<keyword id="KW-0808">Transferase</keyword>
<keyword id="KW-0819">tRNA processing</keyword>
<keyword id="KW-0820">tRNA-binding</keyword>
<protein>
    <recommendedName>
        <fullName evidence="1">Ribonuclease PH</fullName>
        <shortName evidence="1">RNase PH</shortName>
        <ecNumber evidence="1">2.7.7.56</ecNumber>
    </recommendedName>
    <alternativeName>
        <fullName evidence="1">tRNA nucleotidyltransferase</fullName>
    </alternativeName>
</protein>
<comment type="function">
    <text evidence="1">Phosphorolytic 3'-5' exoribonuclease that plays an important role in tRNA 3'-end maturation. Removes nucleotide residues following the 3'-CCA terminus of tRNAs; can also add nucleotides to the ends of RNA molecules by using nucleoside diphosphates as substrates, but this may not be physiologically important. Probably plays a role in initiation of 16S rRNA degradation (leading to ribosome degradation) during starvation.</text>
</comment>
<comment type="catalytic activity">
    <reaction evidence="1">
        <text>tRNA(n+1) + phosphate = tRNA(n) + a ribonucleoside 5'-diphosphate</text>
        <dbReference type="Rhea" id="RHEA:10628"/>
        <dbReference type="Rhea" id="RHEA-COMP:17343"/>
        <dbReference type="Rhea" id="RHEA-COMP:17344"/>
        <dbReference type="ChEBI" id="CHEBI:43474"/>
        <dbReference type="ChEBI" id="CHEBI:57930"/>
        <dbReference type="ChEBI" id="CHEBI:173114"/>
        <dbReference type="EC" id="2.7.7.56"/>
    </reaction>
</comment>
<comment type="subunit">
    <text evidence="1">Homohexameric ring arranged as a trimer of dimers.</text>
</comment>
<comment type="similarity">
    <text evidence="1">Belongs to the RNase PH family.</text>
</comment>
<accession>A4Y0L7</accession>
<proteinExistence type="inferred from homology"/>
<dbReference type="EC" id="2.7.7.56" evidence="1"/>
<dbReference type="EMBL" id="CP000680">
    <property type="protein sequence ID" value="ABP87133.1"/>
    <property type="molecule type" value="Genomic_DNA"/>
</dbReference>
<dbReference type="SMR" id="A4Y0L7"/>
<dbReference type="STRING" id="399739.Pmen_4386"/>
<dbReference type="KEGG" id="pmy:Pmen_4386"/>
<dbReference type="PATRIC" id="fig|399739.8.peg.4445"/>
<dbReference type="eggNOG" id="COG0689">
    <property type="taxonomic scope" value="Bacteria"/>
</dbReference>
<dbReference type="HOGENOM" id="CLU_050858_0_0_6"/>
<dbReference type="OrthoDB" id="9802265at2"/>
<dbReference type="GO" id="GO:0000175">
    <property type="term" value="F:3'-5'-RNA exonuclease activity"/>
    <property type="evidence" value="ECO:0007669"/>
    <property type="project" value="UniProtKB-UniRule"/>
</dbReference>
<dbReference type="GO" id="GO:0000049">
    <property type="term" value="F:tRNA binding"/>
    <property type="evidence" value="ECO:0007669"/>
    <property type="project" value="UniProtKB-UniRule"/>
</dbReference>
<dbReference type="GO" id="GO:0009022">
    <property type="term" value="F:tRNA nucleotidyltransferase activity"/>
    <property type="evidence" value="ECO:0007669"/>
    <property type="project" value="UniProtKB-UniRule"/>
</dbReference>
<dbReference type="GO" id="GO:0016075">
    <property type="term" value="P:rRNA catabolic process"/>
    <property type="evidence" value="ECO:0007669"/>
    <property type="project" value="UniProtKB-UniRule"/>
</dbReference>
<dbReference type="GO" id="GO:0006364">
    <property type="term" value="P:rRNA processing"/>
    <property type="evidence" value="ECO:0007669"/>
    <property type="project" value="UniProtKB-KW"/>
</dbReference>
<dbReference type="GO" id="GO:0008033">
    <property type="term" value="P:tRNA processing"/>
    <property type="evidence" value="ECO:0007669"/>
    <property type="project" value="UniProtKB-UniRule"/>
</dbReference>
<dbReference type="CDD" id="cd11362">
    <property type="entry name" value="RNase_PH_bact"/>
    <property type="match status" value="1"/>
</dbReference>
<dbReference type="FunFam" id="3.30.230.70:FF:000003">
    <property type="entry name" value="Ribonuclease PH"/>
    <property type="match status" value="1"/>
</dbReference>
<dbReference type="Gene3D" id="3.30.230.70">
    <property type="entry name" value="GHMP Kinase, N-terminal domain"/>
    <property type="match status" value="1"/>
</dbReference>
<dbReference type="HAMAP" id="MF_00564">
    <property type="entry name" value="RNase_PH"/>
    <property type="match status" value="1"/>
</dbReference>
<dbReference type="InterPro" id="IPR001247">
    <property type="entry name" value="ExoRNase_PH_dom1"/>
</dbReference>
<dbReference type="InterPro" id="IPR015847">
    <property type="entry name" value="ExoRNase_PH_dom2"/>
</dbReference>
<dbReference type="InterPro" id="IPR036345">
    <property type="entry name" value="ExoRNase_PH_dom2_sf"/>
</dbReference>
<dbReference type="InterPro" id="IPR027408">
    <property type="entry name" value="PNPase/RNase_PH_dom_sf"/>
</dbReference>
<dbReference type="InterPro" id="IPR020568">
    <property type="entry name" value="Ribosomal_Su5_D2-typ_SF"/>
</dbReference>
<dbReference type="InterPro" id="IPR050080">
    <property type="entry name" value="RNase_PH"/>
</dbReference>
<dbReference type="InterPro" id="IPR002381">
    <property type="entry name" value="RNase_PH_bac-type"/>
</dbReference>
<dbReference type="InterPro" id="IPR018336">
    <property type="entry name" value="RNase_PH_CS"/>
</dbReference>
<dbReference type="NCBIfam" id="TIGR01966">
    <property type="entry name" value="RNasePH"/>
    <property type="match status" value="1"/>
</dbReference>
<dbReference type="PANTHER" id="PTHR11953">
    <property type="entry name" value="EXOSOME COMPLEX COMPONENT"/>
    <property type="match status" value="1"/>
</dbReference>
<dbReference type="PANTHER" id="PTHR11953:SF0">
    <property type="entry name" value="EXOSOME COMPLEX COMPONENT RRP41"/>
    <property type="match status" value="1"/>
</dbReference>
<dbReference type="Pfam" id="PF01138">
    <property type="entry name" value="RNase_PH"/>
    <property type="match status" value="1"/>
</dbReference>
<dbReference type="Pfam" id="PF03725">
    <property type="entry name" value="RNase_PH_C"/>
    <property type="match status" value="1"/>
</dbReference>
<dbReference type="SUPFAM" id="SSF55666">
    <property type="entry name" value="Ribonuclease PH domain 2-like"/>
    <property type="match status" value="1"/>
</dbReference>
<dbReference type="SUPFAM" id="SSF54211">
    <property type="entry name" value="Ribosomal protein S5 domain 2-like"/>
    <property type="match status" value="1"/>
</dbReference>
<dbReference type="PROSITE" id="PS01277">
    <property type="entry name" value="RIBONUCLEASE_PH"/>
    <property type="match status" value="1"/>
</dbReference>
<organism>
    <name type="scientific">Ectopseudomonas mendocina (strain ymp)</name>
    <name type="common">Pseudomonas mendocina</name>
    <dbReference type="NCBI Taxonomy" id="399739"/>
    <lineage>
        <taxon>Bacteria</taxon>
        <taxon>Pseudomonadati</taxon>
        <taxon>Pseudomonadota</taxon>
        <taxon>Gammaproteobacteria</taxon>
        <taxon>Pseudomonadales</taxon>
        <taxon>Pseudomonadaceae</taxon>
        <taxon>Ectopseudomonas</taxon>
    </lineage>
</organism>